<evidence type="ECO:0000269" key="1">
    <source>
    </source>
</evidence>
<evidence type="ECO:0000305" key="2"/>
<comment type="function">
    <text>Tachykinins are active peptides which excite neurons, evoke behavioral responses, are potent vasodilators and secretagogues, and contract (directly or indirectly) many smooth muscles.</text>
</comment>
<comment type="subcellular location">
    <subcellularLocation>
        <location>Secreted</location>
    </subcellularLocation>
</comment>
<comment type="tissue specificity">
    <text>Expressed by the skin glands.</text>
</comment>
<comment type="similarity">
    <text evidence="2">Belongs to the tachykinin family.</text>
</comment>
<accession>P42990</accession>
<name>TKN5_PSEGU</name>
<reference key="1">
    <citation type="journal article" date="1990" name="Peptides">
        <title>Six novel tachykinin- and bombesin-related peptides from the skin of the Australian frog Pseudophryne guntheri.</title>
        <authorList>
            <person name="Simmaco M."/>
            <person name="Severini C."/>
            <person name="de Biase D."/>
            <person name="Barra D."/>
            <person name="Bossa F."/>
            <person name="Roberts J.D."/>
            <person name="Melchiorri P."/>
            <person name="Erspamer V."/>
        </authorList>
    </citation>
    <scope>PROTEIN SEQUENCE</scope>
    <scope>PYROGLUTAMATE FORMATION AT GLN-1</scope>
    <scope>AMIDATION AT MET-11</scope>
    <source>
        <tissue>Skin secretion</tissue>
    </source>
</reference>
<sequence>QPNPNEFFGLM</sequence>
<protein>
    <recommendedName>
        <fullName>Substance P-like peptide 2</fullName>
    </recommendedName>
    <alternativeName>
        <fullName>PG-SPII</fullName>
    </alternativeName>
</protein>
<organism>
    <name type="scientific">Pseudophryne guentheri</name>
    <name type="common">Guenther's toadlet</name>
    <dbReference type="NCBI Taxonomy" id="30349"/>
    <lineage>
        <taxon>Eukaryota</taxon>
        <taxon>Metazoa</taxon>
        <taxon>Chordata</taxon>
        <taxon>Craniata</taxon>
        <taxon>Vertebrata</taxon>
        <taxon>Euteleostomi</taxon>
        <taxon>Amphibia</taxon>
        <taxon>Batrachia</taxon>
        <taxon>Anura</taxon>
        <taxon>Neobatrachia</taxon>
        <taxon>Myobatrachoidea</taxon>
        <taxon>Myobatrachidae</taxon>
        <taxon>Myobatrachinae</taxon>
        <taxon>Pseudophryne</taxon>
    </lineage>
</organism>
<proteinExistence type="evidence at protein level"/>
<keyword id="KW-0027">Amidation</keyword>
<keyword id="KW-0878">Amphibian defense peptide</keyword>
<keyword id="KW-0903">Direct protein sequencing</keyword>
<keyword id="KW-0527">Neuropeptide</keyword>
<keyword id="KW-0873">Pyrrolidone carboxylic acid</keyword>
<keyword id="KW-0964">Secreted</keyword>
<feature type="peptide" id="PRO_0000044404" description="Substance P-like peptide 2">
    <location>
        <begin position="1"/>
        <end position="11"/>
    </location>
</feature>
<feature type="modified residue" description="Pyrrolidone carboxylic acid" evidence="1">
    <location>
        <position position="1"/>
    </location>
</feature>
<feature type="modified residue" description="Methionine amide" evidence="1">
    <location>
        <position position="11"/>
    </location>
</feature>
<dbReference type="PIR" id="F60409">
    <property type="entry name" value="F60409"/>
</dbReference>
<dbReference type="GO" id="GO:0005576">
    <property type="term" value="C:extracellular region"/>
    <property type="evidence" value="ECO:0007669"/>
    <property type="project" value="UniProtKB-SubCell"/>
</dbReference>
<dbReference type="GO" id="GO:0006952">
    <property type="term" value="P:defense response"/>
    <property type="evidence" value="ECO:0007669"/>
    <property type="project" value="UniProtKB-KW"/>
</dbReference>
<dbReference type="GO" id="GO:0007218">
    <property type="term" value="P:neuropeptide signaling pathway"/>
    <property type="evidence" value="ECO:0007669"/>
    <property type="project" value="UniProtKB-KW"/>
</dbReference>
<dbReference type="GO" id="GO:0007217">
    <property type="term" value="P:tachykinin receptor signaling pathway"/>
    <property type="evidence" value="ECO:0007669"/>
    <property type="project" value="InterPro"/>
</dbReference>
<dbReference type="InterPro" id="IPR013055">
    <property type="entry name" value="Tachy_Neuro_lke_CS"/>
</dbReference>
<dbReference type="InterPro" id="IPR008215">
    <property type="entry name" value="Tachykinin_dom"/>
</dbReference>
<dbReference type="Pfam" id="PF02202">
    <property type="entry name" value="Tachykinin"/>
    <property type="match status" value="1"/>
</dbReference>
<dbReference type="PROSITE" id="PS00267">
    <property type="entry name" value="TACHYKININ"/>
    <property type="match status" value="1"/>
</dbReference>